<organism>
    <name type="scientific">Pseudoalteromonas translucida (strain TAC 125)</name>
    <dbReference type="NCBI Taxonomy" id="326442"/>
    <lineage>
        <taxon>Bacteria</taxon>
        <taxon>Pseudomonadati</taxon>
        <taxon>Pseudomonadota</taxon>
        <taxon>Gammaproteobacteria</taxon>
        <taxon>Alteromonadales</taxon>
        <taxon>Pseudoalteromonadaceae</taxon>
        <taxon>Pseudoalteromonas</taxon>
    </lineage>
</organism>
<keyword id="KW-0997">Cell inner membrane</keyword>
<keyword id="KW-1003">Cell membrane</keyword>
<keyword id="KW-0143">Chaperone</keyword>
<keyword id="KW-1015">Disulfide bond</keyword>
<keyword id="KW-0249">Electron transport</keyword>
<keyword id="KW-0472">Membrane</keyword>
<keyword id="KW-0560">Oxidoreductase</keyword>
<keyword id="KW-0676">Redox-active center</keyword>
<keyword id="KW-1185">Reference proteome</keyword>
<keyword id="KW-0812">Transmembrane</keyword>
<keyword id="KW-1133">Transmembrane helix</keyword>
<keyword id="KW-0813">Transport</keyword>
<evidence type="ECO:0000255" key="1">
    <source>
        <dbReference type="HAMAP-Rule" id="MF_00286"/>
    </source>
</evidence>
<gene>
    <name evidence="1" type="primary">dsbB</name>
    <name type="ordered locus">PSHAa0837</name>
</gene>
<protein>
    <recommendedName>
        <fullName evidence="1">Disulfide bond formation protein B</fullName>
    </recommendedName>
    <alternativeName>
        <fullName evidence="1">Disulfide oxidoreductase</fullName>
    </alternativeName>
</protein>
<feature type="chain" id="PRO_0000298382" description="Disulfide bond formation protein B">
    <location>
        <begin position="1"/>
        <end position="172"/>
    </location>
</feature>
<feature type="topological domain" description="Cytoplasmic" evidence="1">
    <location>
        <begin position="1"/>
        <end position="13"/>
    </location>
</feature>
<feature type="transmembrane region" description="Helical" evidence="1">
    <location>
        <begin position="14"/>
        <end position="30"/>
    </location>
</feature>
<feature type="topological domain" description="Periplasmic" evidence="1">
    <location>
        <begin position="31"/>
        <end position="48"/>
    </location>
</feature>
<feature type="transmembrane region" description="Helical" evidence="1">
    <location>
        <begin position="49"/>
        <end position="64"/>
    </location>
</feature>
<feature type="topological domain" description="Cytoplasmic" evidence="1">
    <location>
        <begin position="65"/>
        <end position="71"/>
    </location>
</feature>
<feature type="transmembrane region" description="Helical" evidence="1">
    <location>
        <begin position="72"/>
        <end position="89"/>
    </location>
</feature>
<feature type="topological domain" description="Periplasmic" evidence="1">
    <location>
        <begin position="90"/>
        <end position="145"/>
    </location>
</feature>
<feature type="transmembrane region" description="Helical" evidence="1">
    <location>
        <begin position="146"/>
        <end position="164"/>
    </location>
</feature>
<feature type="topological domain" description="Cytoplasmic" evidence="1">
    <location>
        <begin position="165"/>
        <end position="172"/>
    </location>
</feature>
<feature type="disulfide bond" description="Redox-active" evidence="1">
    <location>
        <begin position="40"/>
        <end position="43"/>
    </location>
</feature>
<feature type="disulfide bond" description="Redox-active" evidence="1">
    <location>
        <begin position="105"/>
        <end position="131"/>
    </location>
</feature>
<proteinExistence type="inferred from homology"/>
<name>DSBB_PSET1</name>
<dbReference type="EMBL" id="CR954246">
    <property type="protein sequence ID" value="CAI85918.1"/>
    <property type="molecule type" value="Genomic_DNA"/>
</dbReference>
<dbReference type="SMR" id="Q3IE23"/>
<dbReference type="STRING" id="326442.PSHAa0837"/>
<dbReference type="KEGG" id="pha:PSHAa0837"/>
<dbReference type="PATRIC" id="fig|326442.8.peg.799"/>
<dbReference type="eggNOG" id="COG1495">
    <property type="taxonomic scope" value="Bacteria"/>
</dbReference>
<dbReference type="HOGENOM" id="CLU_098660_2_0_6"/>
<dbReference type="BioCyc" id="PHAL326442:PSHA_RS04085-MONOMER"/>
<dbReference type="Proteomes" id="UP000006843">
    <property type="component" value="Chromosome I"/>
</dbReference>
<dbReference type="GO" id="GO:0005886">
    <property type="term" value="C:plasma membrane"/>
    <property type="evidence" value="ECO:0007669"/>
    <property type="project" value="UniProtKB-SubCell"/>
</dbReference>
<dbReference type="GO" id="GO:0009055">
    <property type="term" value="F:electron transfer activity"/>
    <property type="evidence" value="ECO:0007669"/>
    <property type="project" value="UniProtKB-UniRule"/>
</dbReference>
<dbReference type="GO" id="GO:0015035">
    <property type="term" value="F:protein-disulfide reductase activity"/>
    <property type="evidence" value="ECO:0007669"/>
    <property type="project" value="UniProtKB-UniRule"/>
</dbReference>
<dbReference type="GO" id="GO:0006457">
    <property type="term" value="P:protein folding"/>
    <property type="evidence" value="ECO:0007669"/>
    <property type="project" value="InterPro"/>
</dbReference>
<dbReference type="Gene3D" id="1.20.1550.10">
    <property type="entry name" value="DsbB-like"/>
    <property type="match status" value="1"/>
</dbReference>
<dbReference type="HAMAP" id="MF_00286">
    <property type="entry name" value="DsbB"/>
    <property type="match status" value="1"/>
</dbReference>
<dbReference type="InterPro" id="IPR003752">
    <property type="entry name" value="DiS_bond_form_DsbB/BdbC"/>
</dbReference>
<dbReference type="InterPro" id="IPR022920">
    <property type="entry name" value="Disulphide_bond_form_DsbB"/>
</dbReference>
<dbReference type="InterPro" id="IPR050183">
    <property type="entry name" value="DsbB"/>
</dbReference>
<dbReference type="InterPro" id="IPR023380">
    <property type="entry name" value="DsbB-like_sf"/>
</dbReference>
<dbReference type="NCBIfam" id="NF002485">
    <property type="entry name" value="PRK01749.1"/>
    <property type="match status" value="1"/>
</dbReference>
<dbReference type="PANTHER" id="PTHR36570">
    <property type="entry name" value="DISULFIDE BOND FORMATION PROTEIN B"/>
    <property type="match status" value="1"/>
</dbReference>
<dbReference type="PANTHER" id="PTHR36570:SF2">
    <property type="entry name" value="DISULFIDE BOND FORMATION PROTEIN B"/>
    <property type="match status" value="1"/>
</dbReference>
<dbReference type="Pfam" id="PF02600">
    <property type="entry name" value="DsbB"/>
    <property type="match status" value="1"/>
</dbReference>
<dbReference type="SUPFAM" id="SSF158442">
    <property type="entry name" value="DsbB-like"/>
    <property type="match status" value="1"/>
</dbReference>
<sequence length="172" mass="19467">MNWLAQLPTQRTPWLLFSGIVFLLEITALFFQYKMGLAPCIMCIYQRTAVLGLLIAGIIGTSNPEHRGVRLLAYSVWAVSSVWGFIIAREHIEMQTTTDPFAFSCEFEPNFPAFMPLHEWIPSFFAATGDCGNIDWQFAGLSMPAWMEVIFALFAATLFLLVTSRLMTKRSL</sequence>
<comment type="function">
    <text evidence="1">Required for disulfide bond formation in some periplasmic proteins. Acts by oxidizing the DsbA protein.</text>
</comment>
<comment type="subcellular location">
    <subcellularLocation>
        <location evidence="1">Cell inner membrane</location>
        <topology evidence="1">Multi-pass membrane protein</topology>
    </subcellularLocation>
</comment>
<comment type="similarity">
    <text evidence="1">Belongs to the DsbB family.</text>
</comment>
<reference key="1">
    <citation type="journal article" date="2005" name="Genome Res.">
        <title>Coping with cold: the genome of the versatile marine Antarctica bacterium Pseudoalteromonas haloplanktis TAC125.</title>
        <authorList>
            <person name="Medigue C."/>
            <person name="Krin E."/>
            <person name="Pascal G."/>
            <person name="Barbe V."/>
            <person name="Bernsel A."/>
            <person name="Bertin P.N."/>
            <person name="Cheung F."/>
            <person name="Cruveiller S."/>
            <person name="D'Amico S."/>
            <person name="Duilio A."/>
            <person name="Fang G."/>
            <person name="Feller G."/>
            <person name="Ho C."/>
            <person name="Mangenot S."/>
            <person name="Marino G."/>
            <person name="Nilsson J."/>
            <person name="Parrilli E."/>
            <person name="Rocha E.P.C."/>
            <person name="Rouy Z."/>
            <person name="Sekowska A."/>
            <person name="Tutino M.L."/>
            <person name="Vallenet D."/>
            <person name="von Heijne G."/>
            <person name="Danchin A."/>
        </authorList>
    </citation>
    <scope>NUCLEOTIDE SEQUENCE [LARGE SCALE GENOMIC DNA]</scope>
    <source>
        <strain>TAC 125</strain>
    </source>
</reference>
<accession>Q3IE23</accession>